<dbReference type="EMBL" id="BA000033">
    <property type="protein sequence ID" value="BAB94306.1"/>
    <property type="molecule type" value="Genomic_DNA"/>
</dbReference>
<dbReference type="RefSeq" id="WP_000375686.1">
    <property type="nucleotide sequence ID" value="NC_003923.1"/>
</dbReference>
<dbReference type="SMR" id="Q8NY02"/>
<dbReference type="KEGG" id="sam:MW0441"/>
<dbReference type="HOGENOM" id="CLU_157169_1_0_9"/>
<dbReference type="GO" id="GO:0009295">
    <property type="term" value="C:nucleoid"/>
    <property type="evidence" value="ECO:0007669"/>
    <property type="project" value="UniProtKB-SubCell"/>
</dbReference>
<dbReference type="GO" id="GO:0006260">
    <property type="term" value="P:DNA replication"/>
    <property type="evidence" value="ECO:0007669"/>
    <property type="project" value="UniProtKB-UniRule"/>
</dbReference>
<dbReference type="HAMAP" id="MF_01159">
    <property type="entry name" value="YabA"/>
    <property type="match status" value="1"/>
</dbReference>
<dbReference type="InterPro" id="IPR010377">
    <property type="entry name" value="YabA"/>
</dbReference>
<dbReference type="NCBIfam" id="NF009641">
    <property type="entry name" value="PRK13169.1-2"/>
    <property type="match status" value="1"/>
</dbReference>
<dbReference type="Pfam" id="PF06156">
    <property type="entry name" value="YabA"/>
    <property type="match status" value="1"/>
</dbReference>
<dbReference type="PIRSF" id="PIRSF021439">
    <property type="entry name" value="DUF972"/>
    <property type="match status" value="1"/>
</dbReference>
<reference key="1">
    <citation type="journal article" date="2002" name="Lancet">
        <title>Genome and virulence determinants of high virulence community-acquired MRSA.</title>
        <authorList>
            <person name="Baba T."/>
            <person name="Takeuchi F."/>
            <person name="Kuroda M."/>
            <person name="Yuzawa H."/>
            <person name="Aoki K."/>
            <person name="Oguchi A."/>
            <person name="Nagai Y."/>
            <person name="Iwama N."/>
            <person name="Asano K."/>
            <person name="Naimi T."/>
            <person name="Kuroda H."/>
            <person name="Cui L."/>
            <person name="Yamamoto K."/>
            <person name="Hiramatsu K."/>
        </authorList>
    </citation>
    <scope>NUCLEOTIDE SEQUENCE [LARGE SCALE GENOMIC DNA]</scope>
    <source>
        <strain>MW2</strain>
    </source>
</reference>
<accession>Q8NY02</accession>
<evidence type="ECO:0000255" key="1">
    <source>
        <dbReference type="HAMAP-Rule" id="MF_01159"/>
    </source>
</evidence>
<name>YABA_STAAW</name>
<feature type="chain" id="PRO_0000211920" description="Replication initiation control protein YabA">
    <location>
        <begin position="1"/>
        <end position="115"/>
    </location>
</feature>
<feature type="binding site" evidence="1">
    <location>
        <position position="90"/>
    </location>
    <ligand>
        <name>Zn(2+)</name>
        <dbReference type="ChEBI" id="CHEBI:29105"/>
    </ligand>
</feature>
<feature type="binding site" evidence="1">
    <location>
        <position position="92"/>
    </location>
    <ligand>
        <name>Zn(2+)</name>
        <dbReference type="ChEBI" id="CHEBI:29105"/>
    </ligand>
</feature>
<feature type="binding site" evidence="1">
    <location>
        <position position="106"/>
    </location>
    <ligand>
        <name>Zn(2+)</name>
        <dbReference type="ChEBI" id="CHEBI:29105"/>
    </ligand>
</feature>
<feature type="binding site" evidence="1">
    <location>
        <position position="109"/>
    </location>
    <ligand>
        <name>Zn(2+)</name>
        <dbReference type="ChEBI" id="CHEBI:29105"/>
    </ligand>
</feature>
<protein>
    <recommendedName>
        <fullName evidence="1">Replication initiation control protein YabA</fullName>
    </recommendedName>
</protein>
<comment type="function">
    <text evidence="1">Involved in control of chromosome replication initiation. Inhibits the cooperative binding of DnaA to the oriC region, thus negatively regulating initiation of chromosome replication. Inhibits the ability of DnaA-ATP to form a helix on DNA; does not disassemble preformed DnaA-DNA helices. Decreases the residence time of DnaA on the chromosome at its binding sites (oriC, replication forks and promoter-binding sites). Tethers DnaA to the replication machinery via the DNA polymerase beta sliding clamp subunit (dnaN). Associates with oriC and other DnaA targets on the chromosome in a DnaA-dependent manner.</text>
</comment>
<comment type="cofactor">
    <cofactor evidence="1">
        <name>Zn(2+)</name>
        <dbReference type="ChEBI" id="CHEBI:29105"/>
    </cofactor>
    <text evidence="1">Binds 1 zinc ion per subunit.</text>
</comment>
<comment type="subunit">
    <text evidence="1">Homotetramer. Interacts with both DnaA and DnaN, acting as a bridge between these two proteins.</text>
</comment>
<comment type="subcellular location">
    <subcellularLocation>
        <location evidence="1">Cytoplasm</location>
        <location evidence="1">Nucleoid</location>
    </subcellularLocation>
    <text evidence="1">Localizes in tight foci, which correspond to the replisome at mid-cell throughout the cell cycle.</text>
</comment>
<comment type="similarity">
    <text evidence="1">Belongs to the YabA family.</text>
</comment>
<keyword id="KW-0963">Cytoplasm</keyword>
<keyword id="KW-0235">DNA replication</keyword>
<keyword id="KW-0236">DNA replication inhibitor</keyword>
<keyword id="KW-0479">Metal-binding</keyword>
<keyword id="KW-0862">Zinc</keyword>
<proteinExistence type="inferred from homology"/>
<gene>
    <name evidence="1" type="primary">yabA</name>
    <name type="ordered locus">MW0441</name>
</gene>
<sequence length="115" mass="12926">MDRNEIFEKIMRLEMNVNQLSKETSELKALAVELVEENVALQLENDNLKKVLGNDEPTTIDTANSKPAKAVKKPLPSKDNLAILYGEGFHICKGELFGKHRHGEDCLFCLEVLSD</sequence>
<organism>
    <name type="scientific">Staphylococcus aureus (strain MW2)</name>
    <dbReference type="NCBI Taxonomy" id="196620"/>
    <lineage>
        <taxon>Bacteria</taxon>
        <taxon>Bacillati</taxon>
        <taxon>Bacillota</taxon>
        <taxon>Bacilli</taxon>
        <taxon>Bacillales</taxon>
        <taxon>Staphylococcaceae</taxon>
        <taxon>Staphylococcus</taxon>
    </lineage>
</organism>